<sequence>MSRRRTAKKRIVMPDPVYKNSLLELIVRQVMRNGKKLLAYRIMYNSMIKIAEMTQKDPLDVLEKAIRNVTPLIEVKARRVGGSTYQVPLEVLPERGTTLAIRWILAACRKNRGKPMYIKLTNELIDASNKSGSAIKKKDEIHRMAEANKAFAKQRF</sequence>
<accession>Q9TJQ9</accession>
<keyword id="KW-0934">Plastid</keyword>
<keyword id="KW-0687">Ribonucleoprotein</keyword>
<keyword id="KW-0689">Ribosomal protein</keyword>
<keyword id="KW-0694">RNA-binding</keyword>
<keyword id="KW-0699">rRNA-binding</keyword>
<feature type="chain" id="PRO_0000124494" description="Small ribosomal subunit protein uS7c">
    <location>
        <begin position="1"/>
        <end position="156"/>
    </location>
</feature>
<comment type="function">
    <text evidence="1">One of the primary rRNA binding proteins, it binds directly to 16S rRNA where it nucleates assembly of the head domain of the 30S subunit.</text>
</comment>
<comment type="subunit">
    <text>Part of the 30S ribosomal subunit.</text>
</comment>
<comment type="subcellular location">
    <subcellularLocation>
        <location>Plastid</location>
    </subcellularLocation>
</comment>
<comment type="similarity">
    <text evidence="2">Belongs to the universal ribosomal protein uS7 family.</text>
</comment>
<protein>
    <recommendedName>
        <fullName evidence="2">Small ribosomal subunit protein uS7c</fullName>
    </recommendedName>
    <alternativeName>
        <fullName>30S ribosomal protein S7, plastid</fullName>
    </alternativeName>
</protein>
<name>RR7_PROWI</name>
<geneLocation type="non-photosynthetic plastid"/>
<organism>
    <name type="scientific">Prototheca wickerhamii</name>
    <dbReference type="NCBI Taxonomy" id="3111"/>
    <lineage>
        <taxon>Eukaryota</taxon>
        <taxon>Viridiplantae</taxon>
        <taxon>Chlorophyta</taxon>
        <taxon>core chlorophytes</taxon>
        <taxon>Trebouxiophyceae</taxon>
        <taxon>Chlorellales</taxon>
        <taxon>Chlorellaceae</taxon>
        <taxon>Prototheca</taxon>
    </lineage>
</organism>
<reference key="1">
    <citation type="journal article" date="2002" name="Mol. Genet. Genomics">
        <title>The genes encoding subunits of ATP synthase are conserved in the reduced plastid genome of the heterotrophic alga Prototheca wickerhamii.</title>
        <authorList>
            <person name="Knauf U."/>
            <person name="Hachtel W."/>
        </authorList>
    </citation>
    <scope>NUCLEOTIDE SEQUENCE [GENOMIC DNA]</scope>
    <source>
        <strain>263-11</strain>
    </source>
</reference>
<dbReference type="EMBL" id="AJ245645">
    <property type="protein sequence ID" value="CAB53112.1"/>
    <property type="molecule type" value="Genomic_DNA"/>
</dbReference>
<dbReference type="SMR" id="Q9TJQ9"/>
<dbReference type="GO" id="GO:0009536">
    <property type="term" value="C:plastid"/>
    <property type="evidence" value="ECO:0007669"/>
    <property type="project" value="UniProtKB-SubCell"/>
</dbReference>
<dbReference type="GO" id="GO:0015935">
    <property type="term" value="C:small ribosomal subunit"/>
    <property type="evidence" value="ECO:0007669"/>
    <property type="project" value="InterPro"/>
</dbReference>
<dbReference type="GO" id="GO:0019843">
    <property type="term" value="F:rRNA binding"/>
    <property type="evidence" value="ECO:0007669"/>
    <property type="project" value="UniProtKB-KW"/>
</dbReference>
<dbReference type="GO" id="GO:0003735">
    <property type="term" value="F:structural constituent of ribosome"/>
    <property type="evidence" value="ECO:0007669"/>
    <property type="project" value="InterPro"/>
</dbReference>
<dbReference type="GO" id="GO:0006412">
    <property type="term" value="P:translation"/>
    <property type="evidence" value="ECO:0007669"/>
    <property type="project" value="InterPro"/>
</dbReference>
<dbReference type="CDD" id="cd14871">
    <property type="entry name" value="uS7_Chloroplast"/>
    <property type="match status" value="1"/>
</dbReference>
<dbReference type="FunFam" id="1.10.455.10:FF:000001">
    <property type="entry name" value="30S ribosomal protein S7"/>
    <property type="match status" value="1"/>
</dbReference>
<dbReference type="Gene3D" id="1.10.455.10">
    <property type="entry name" value="Ribosomal protein S7 domain"/>
    <property type="match status" value="1"/>
</dbReference>
<dbReference type="HAMAP" id="MF_00480_B">
    <property type="entry name" value="Ribosomal_uS7_B"/>
    <property type="match status" value="1"/>
</dbReference>
<dbReference type="InterPro" id="IPR000235">
    <property type="entry name" value="Ribosomal_uS7"/>
</dbReference>
<dbReference type="InterPro" id="IPR005717">
    <property type="entry name" value="Ribosomal_uS7_bac/org-type"/>
</dbReference>
<dbReference type="InterPro" id="IPR020606">
    <property type="entry name" value="Ribosomal_uS7_CS"/>
</dbReference>
<dbReference type="InterPro" id="IPR023798">
    <property type="entry name" value="Ribosomal_uS7_dom"/>
</dbReference>
<dbReference type="InterPro" id="IPR036823">
    <property type="entry name" value="Ribosomal_uS7_dom_sf"/>
</dbReference>
<dbReference type="NCBIfam" id="TIGR01029">
    <property type="entry name" value="rpsG_bact"/>
    <property type="match status" value="1"/>
</dbReference>
<dbReference type="PANTHER" id="PTHR11205">
    <property type="entry name" value="RIBOSOMAL PROTEIN S7"/>
    <property type="match status" value="1"/>
</dbReference>
<dbReference type="Pfam" id="PF00177">
    <property type="entry name" value="Ribosomal_S7"/>
    <property type="match status" value="1"/>
</dbReference>
<dbReference type="PIRSF" id="PIRSF002122">
    <property type="entry name" value="RPS7p_RPS7a_RPS5e_RPS7o"/>
    <property type="match status" value="1"/>
</dbReference>
<dbReference type="SUPFAM" id="SSF47973">
    <property type="entry name" value="Ribosomal protein S7"/>
    <property type="match status" value="1"/>
</dbReference>
<dbReference type="PROSITE" id="PS00052">
    <property type="entry name" value="RIBOSOMAL_S7"/>
    <property type="match status" value="1"/>
</dbReference>
<proteinExistence type="inferred from homology"/>
<gene>
    <name type="primary">rps7</name>
</gene>
<evidence type="ECO:0000250" key="1"/>
<evidence type="ECO:0000305" key="2"/>